<proteinExistence type="inferred from homology"/>
<dbReference type="EMBL" id="CP000950">
    <property type="protein sequence ID" value="ACA68337.1"/>
    <property type="molecule type" value="Genomic_DNA"/>
</dbReference>
<dbReference type="RefSeq" id="WP_002210639.1">
    <property type="nucleotide sequence ID" value="NZ_CP009792.1"/>
</dbReference>
<dbReference type="KEGG" id="ypy:YPK_2050"/>
<dbReference type="PATRIC" id="fig|502800.11.peg.2730"/>
<dbReference type="GO" id="GO:0005886">
    <property type="term" value="C:plasma membrane"/>
    <property type="evidence" value="ECO:0007669"/>
    <property type="project" value="UniProtKB-SubCell"/>
</dbReference>
<dbReference type="HAMAP" id="MF_01067">
    <property type="entry name" value="UPF0259"/>
    <property type="match status" value="1"/>
</dbReference>
<dbReference type="InterPro" id="IPR009627">
    <property type="entry name" value="UPF0259"/>
</dbReference>
<dbReference type="NCBIfam" id="NF002774">
    <property type="entry name" value="PRK02868.1"/>
    <property type="match status" value="1"/>
</dbReference>
<dbReference type="Pfam" id="PF06790">
    <property type="entry name" value="UPF0259"/>
    <property type="match status" value="1"/>
</dbReference>
<feature type="chain" id="PRO_1000136598" description="UPF0259 membrane protein YPK_2050">
    <location>
        <begin position="1"/>
        <end position="256"/>
    </location>
</feature>
<feature type="transmembrane region" description="Helical" evidence="1">
    <location>
        <begin position="20"/>
        <end position="40"/>
    </location>
</feature>
<feature type="transmembrane region" description="Helical" evidence="1">
    <location>
        <begin position="90"/>
        <end position="110"/>
    </location>
</feature>
<feature type="transmembrane region" description="Helical" evidence="1">
    <location>
        <begin position="118"/>
        <end position="138"/>
    </location>
</feature>
<feature type="transmembrane region" description="Helical" evidence="1">
    <location>
        <begin position="141"/>
        <end position="161"/>
    </location>
</feature>
<feature type="transmembrane region" description="Helical" evidence="1">
    <location>
        <begin position="192"/>
        <end position="212"/>
    </location>
</feature>
<feature type="transmembrane region" description="Helical" evidence="1">
    <location>
        <begin position="221"/>
        <end position="241"/>
    </location>
</feature>
<accession>B1JKS6</accession>
<sequence length="256" mass="27754">MPITANTLYRDSFNFLRNQIAAILLLALLTAFITVMLNQTFMPASEQLSILSIPENDITSSGNLSISEIVSQMTPEQQMVLLRVSAVATFSALVGNVLLVGGLLTLIAMVSQGRRVSALQAIGLSLPILPRLLVLMFISTLVIQLGLTFFIVPGVAIAIALSLSPIIVTNERMGIFAAMKASAQLAFANVRLIVPAMMLWIAVKLLLLFLISRFTVLPPTIATIVLSTLSNLASALLLVYLFRLYMLLRPVSLDKQ</sequence>
<name>Y2050_YERPY</name>
<reference key="1">
    <citation type="submission" date="2008-02" db="EMBL/GenBank/DDBJ databases">
        <title>Complete sequence of Yersinia pseudotuberculosis YPIII.</title>
        <authorList>
            <consortium name="US DOE Joint Genome Institute"/>
            <person name="Copeland A."/>
            <person name="Lucas S."/>
            <person name="Lapidus A."/>
            <person name="Glavina del Rio T."/>
            <person name="Dalin E."/>
            <person name="Tice H."/>
            <person name="Bruce D."/>
            <person name="Goodwin L."/>
            <person name="Pitluck S."/>
            <person name="Munk A.C."/>
            <person name="Brettin T."/>
            <person name="Detter J.C."/>
            <person name="Han C."/>
            <person name="Tapia R."/>
            <person name="Schmutz J."/>
            <person name="Larimer F."/>
            <person name="Land M."/>
            <person name="Hauser L."/>
            <person name="Challacombe J.F."/>
            <person name="Green L."/>
            <person name="Lindler L.E."/>
            <person name="Nikolich M.P."/>
            <person name="Richardson P."/>
        </authorList>
    </citation>
    <scope>NUCLEOTIDE SEQUENCE [LARGE SCALE GENOMIC DNA]</scope>
    <source>
        <strain>YPIII</strain>
    </source>
</reference>
<gene>
    <name type="ordered locus">YPK_2050</name>
</gene>
<evidence type="ECO:0000255" key="1">
    <source>
        <dbReference type="HAMAP-Rule" id="MF_01067"/>
    </source>
</evidence>
<comment type="subcellular location">
    <subcellularLocation>
        <location evidence="1">Cell inner membrane</location>
        <topology evidence="1">Multi-pass membrane protein</topology>
    </subcellularLocation>
</comment>
<comment type="similarity">
    <text evidence="1">Belongs to the UPF0259 family.</text>
</comment>
<keyword id="KW-0997">Cell inner membrane</keyword>
<keyword id="KW-1003">Cell membrane</keyword>
<keyword id="KW-0472">Membrane</keyword>
<keyword id="KW-0812">Transmembrane</keyword>
<keyword id="KW-1133">Transmembrane helix</keyword>
<protein>
    <recommendedName>
        <fullName evidence="1">UPF0259 membrane protein YPK_2050</fullName>
    </recommendedName>
</protein>
<organism>
    <name type="scientific">Yersinia pseudotuberculosis serotype O:3 (strain YPIII)</name>
    <dbReference type="NCBI Taxonomy" id="502800"/>
    <lineage>
        <taxon>Bacteria</taxon>
        <taxon>Pseudomonadati</taxon>
        <taxon>Pseudomonadota</taxon>
        <taxon>Gammaproteobacteria</taxon>
        <taxon>Enterobacterales</taxon>
        <taxon>Yersiniaceae</taxon>
        <taxon>Yersinia</taxon>
    </lineage>
</organism>